<protein>
    <recommendedName>
        <fullName>Lysine-specific demethylase 4B</fullName>
        <ecNumber evidence="3">1.14.11.66</ecNumber>
    </recommendedName>
    <alternativeName>
        <fullName>JmjC domain-containing histone demethylation protein 3B</fullName>
    </alternativeName>
    <alternativeName>
        <fullName>Jumonji domain-containing protein 2B</fullName>
    </alternativeName>
    <alternativeName>
        <fullName evidence="10">[histone H3]-trimethyl-L-lysine(9) demethylase 4B</fullName>
    </alternativeName>
</protein>
<reference key="1">
    <citation type="journal article" date="2005" name="Science">
        <title>The transcriptional landscape of the mammalian genome.</title>
        <authorList>
            <person name="Carninci P."/>
            <person name="Kasukawa T."/>
            <person name="Katayama S."/>
            <person name="Gough J."/>
            <person name="Frith M.C."/>
            <person name="Maeda N."/>
            <person name="Oyama R."/>
            <person name="Ravasi T."/>
            <person name="Lenhard B."/>
            <person name="Wells C."/>
            <person name="Kodzius R."/>
            <person name="Shimokawa K."/>
            <person name="Bajic V.B."/>
            <person name="Brenner S.E."/>
            <person name="Batalov S."/>
            <person name="Forrest A.R."/>
            <person name="Zavolan M."/>
            <person name="Davis M.J."/>
            <person name="Wilming L.G."/>
            <person name="Aidinis V."/>
            <person name="Allen J.E."/>
            <person name="Ambesi-Impiombato A."/>
            <person name="Apweiler R."/>
            <person name="Aturaliya R.N."/>
            <person name="Bailey T.L."/>
            <person name="Bansal M."/>
            <person name="Baxter L."/>
            <person name="Beisel K.W."/>
            <person name="Bersano T."/>
            <person name="Bono H."/>
            <person name="Chalk A.M."/>
            <person name="Chiu K.P."/>
            <person name="Choudhary V."/>
            <person name="Christoffels A."/>
            <person name="Clutterbuck D.R."/>
            <person name="Crowe M.L."/>
            <person name="Dalla E."/>
            <person name="Dalrymple B.P."/>
            <person name="de Bono B."/>
            <person name="Della Gatta G."/>
            <person name="di Bernardo D."/>
            <person name="Down T."/>
            <person name="Engstrom P."/>
            <person name="Fagiolini M."/>
            <person name="Faulkner G."/>
            <person name="Fletcher C.F."/>
            <person name="Fukushima T."/>
            <person name="Furuno M."/>
            <person name="Futaki S."/>
            <person name="Gariboldi M."/>
            <person name="Georgii-Hemming P."/>
            <person name="Gingeras T.R."/>
            <person name="Gojobori T."/>
            <person name="Green R.E."/>
            <person name="Gustincich S."/>
            <person name="Harbers M."/>
            <person name="Hayashi Y."/>
            <person name="Hensch T.K."/>
            <person name="Hirokawa N."/>
            <person name="Hill D."/>
            <person name="Huminiecki L."/>
            <person name="Iacono M."/>
            <person name="Ikeo K."/>
            <person name="Iwama A."/>
            <person name="Ishikawa T."/>
            <person name="Jakt M."/>
            <person name="Kanapin A."/>
            <person name="Katoh M."/>
            <person name="Kawasawa Y."/>
            <person name="Kelso J."/>
            <person name="Kitamura H."/>
            <person name="Kitano H."/>
            <person name="Kollias G."/>
            <person name="Krishnan S.P."/>
            <person name="Kruger A."/>
            <person name="Kummerfeld S.K."/>
            <person name="Kurochkin I.V."/>
            <person name="Lareau L.F."/>
            <person name="Lazarevic D."/>
            <person name="Lipovich L."/>
            <person name="Liu J."/>
            <person name="Liuni S."/>
            <person name="McWilliam S."/>
            <person name="Madan Babu M."/>
            <person name="Madera M."/>
            <person name="Marchionni L."/>
            <person name="Matsuda H."/>
            <person name="Matsuzawa S."/>
            <person name="Miki H."/>
            <person name="Mignone F."/>
            <person name="Miyake S."/>
            <person name="Morris K."/>
            <person name="Mottagui-Tabar S."/>
            <person name="Mulder N."/>
            <person name="Nakano N."/>
            <person name="Nakauchi H."/>
            <person name="Ng P."/>
            <person name="Nilsson R."/>
            <person name="Nishiguchi S."/>
            <person name="Nishikawa S."/>
            <person name="Nori F."/>
            <person name="Ohara O."/>
            <person name="Okazaki Y."/>
            <person name="Orlando V."/>
            <person name="Pang K.C."/>
            <person name="Pavan W.J."/>
            <person name="Pavesi G."/>
            <person name="Pesole G."/>
            <person name="Petrovsky N."/>
            <person name="Piazza S."/>
            <person name="Reed J."/>
            <person name="Reid J.F."/>
            <person name="Ring B.Z."/>
            <person name="Ringwald M."/>
            <person name="Rost B."/>
            <person name="Ruan Y."/>
            <person name="Salzberg S.L."/>
            <person name="Sandelin A."/>
            <person name="Schneider C."/>
            <person name="Schoenbach C."/>
            <person name="Sekiguchi K."/>
            <person name="Semple C.A."/>
            <person name="Seno S."/>
            <person name="Sessa L."/>
            <person name="Sheng Y."/>
            <person name="Shibata Y."/>
            <person name="Shimada H."/>
            <person name="Shimada K."/>
            <person name="Silva D."/>
            <person name="Sinclair B."/>
            <person name="Sperling S."/>
            <person name="Stupka E."/>
            <person name="Sugiura K."/>
            <person name="Sultana R."/>
            <person name="Takenaka Y."/>
            <person name="Taki K."/>
            <person name="Tammoja K."/>
            <person name="Tan S.L."/>
            <person name="Tang S."/>
            <person name="Taylor M.S."/>
            <person name="Tegner J."/>
            <person name="Teichmann S.A."/>
            <person name="Ueda H.R."/>
            <person name="van Nimwegen E."/>
            <person name="Verardo R."/>
            <person name="Wei C.L."/>
            <person name="Yagi K."/>
            <person name="Yamanishi H."/>
            <person name="Zabarovsky E."/>
            <person name="Zhu S."/>
            <person name="Zimmer A."/>
            <person name="Hide W."/>
            <person name="Bult C."/>
            <person name="Grimmond S.M."/>
            <person name="Teasdale R.D."/>
            <person name="Liu E.T."/>
            <person name="Brusic V."/>
            <person name="Quackenbush J."/>
            <person name="Wahlestedt C."/>
            <person name="Mattick J.S."/>
            <person name="Hume D.A."/>
            <person name="Kai C."/>
            <person name="Sasaki D."/>
            <person name="Tomaru Y."/>
            <person name="Fukuda S."/>
            <person name="Kanamori-Katayama M."/>
            <person name="Suzuki M."/>
            <person name="Aoki J."/>
            <person name="Arakawa T."/>
            <person name="Iida J."/>
            <person name="Imamura K."/>
            <person name="Itoh M."/>
            <person name="Kato T."/>
            <person name="Kawaji H."/>
            <person name="Kawagashira N."/>
            <person name="Kawashima T."/>
            <person name="Kojima M."/>
            <person name="Kondo S."/>
            <person name="Konno H."/>
            <person name="Nakano K."/>
            <person name="Ninomiya N."/>
            <person name="Nishio T."/>
            <person name="Okada M."/>
            <person name="Plessy C."/>
            <person name="Shibata K."/>
            <person name="Shiraki T."/>
            <person name="Suzuki S."/>
            <person name="Tagami M."/>
            <person name="Waki K."/>
            <person name="Watahiki A."/>
            <person name="Okamura-Oho Y."/>
            <person name="Suzuki H."/>
            <person name="Kawai J."/>
            <person name="Hayashizaki Y."/>
        </authorList>
    </citation>
    <scope>NUCLEOTIDE SEQUENCE [LARGE SCALE MRNA] (ISOFORMS 1 AND 2)</scope>
    <source>
        <strain>C57BL/6J</strain>
        <tissue>Embryonic tail</tissue>
        <tissue>Spinal ganglion</tissue>
    </source>
</reference>
<reference key="2">
    <citation type="journal article" date="2004" name="Genome Res.">
        <title>The status, quality, and expansion of the NIH full-length cDNA project: the Mammalian Gene Collection (MGC).</title>
        <authorList>
            <consortium name="The MGC Project Team"/>
        </authorList>
    </citation>
    <scope>NUCLEOTIDE SEQUENCE [LARGE SCALE MRNA] (ISOFORM 1)</scope>
    <source>
        <tissue>Mammary tumor</tissue>
    </source>
</reference>
<reference key="3">
    <citation type="journal article" date="2016" name="Transl. Psychiatry">
        <title>Deletion of JMJD2B in neurons leads to defective spine maturation, hyperactive behavior and memory deficits in mouse.</title>
        <authorList>
            <person name="Fujiwara K."/>
            <person name="Fujita Y."/>
            <person name="Kasai A."/>
            <person name="Onaka Y."/>
            <person name="Hashimoto H."/>
            <person name="Okada H."/>
            <person name="Yamashita T."/>
        </authorList>
    </citation>
    <scope>FUNCTION</scope>
    <scope>DEVELOPMENTAL STAGE</scope>
</reference>
<dbReference type="EC" id="1.14.11.66" evidence="3"/>
<dbReference type="EMBL" id="AK129233">
    <property type="protein sequence ID" value="BAC98043.1"/>
    <property type="status" value="ALT_INIT"/>
    <property type="molecule type" value="mRNA"/>
</dbReference>
<dbReference type="EMBL" id="AK141879">
    <property type="protein sequence ID" value="BAE24866.1"/>
    <property type="molecule type" value="mRNA"/>
</dbReference>
<dbReference type="EMBL" id="BC005480">
    <property type="protein sequence ID" value="AAH05480.1"/>
    <property type="molecule type" value="mRNA"/>
</dbReference>
<dbReference type="EMBL" id="BC007145">
    <property type="protein sequence ID" value="AAH07145.1"/>
    <property type="molecule type" value="mRNA"/>
</dbReference>
<dbReference type="CCDS" id="CCDS28904.1">
    <molecule id="Q91VY5-1"/>
</dbReference>
<dbReference type="RefSeq" id="NP_742144.1">
    <molecule id="Q91VY5-1"/>
    <property type="nucleotide sequence ID" value="NM_172132.3"/>
</dbReference>
<dbReference type="RefSeq" id="XP_030105463.1">
    <molecule id="Q91VY5-1"/>
    <property type="nucleotide sequence ID" value="XM_030249603.2"/>
</dbReference>
<dbReference type="SMR" id="Q91VY5"/>
<dbReference type="BioGRID" id="228758">
    <property type="interactions" value="8"/>
</dbReference>
<dbReference type="FunCoup" id="Q91VY5">
    <property type="interactions" value="1612"/>
</dbReference>
<dbReference type="IntAct" id="Q91VY5">
    <property type="interactions" value="2"/>
</dbReference>
<dbReference type="STRING" id="10090.ENSMUSP00000025036"/>
<dbReference type="GlyGen" id="Q91VY5">
    <property type="glycosylation" value="1 site"/>
</dbReference>
<dbReference type="iPTMnet" id="Q91VY5"/>
<dbReference type="PhosphoSitePlus" id="Q91VY5"/>
<dbReference type="jPOST" id="Q91VY5"/>
<dbReference type="PaxDb" id="10090-ENSMUSP00000025036"/>
<dbReference type="PeptideAtlas" id="Q91VY5"/>
<dbReference type="ProteomicsDB" id="264989">
    <molecule id="Q91VY5-1"/>
</dbReference>
<dbReference type="ProteomicsDB" id="264990">
    <molecule id="Q91VY5-2"/>
</dbReference>
<dbReference type="Pumba" id="Q91VY5"/>
<dbReference type="Antibodypedia" id="11548">
    <property type="antibodies" value="536 antibodies from 36 providers"/>
</dbReference>
<dbReference type="DNASU" id="193796"/>
<dbReference type="Ensembl" id="ENSMUST00000025036.11">
    <molecule id="Q91VY5-1"/>
    <property type="protein sequence ID" value="ENSMUSP00000025036.5"/>
    <property type="gene ID" value="ENSMUSG00000024201.13"/>
</dbReference>
<dbReference type="GeneID" id="193796"/>
<dbReference type="KEGG" id="mmu:193796"/>
<dbReference type="UCSC" id="uc008dbu.2">
    <molecule id="Q91VY5-2"/>
    <property type="organism name" value="mouse"/>
</dbReference>
<dbReference type="UCSC" id="uc008dbv.2">
    <molecule id="Q91VY5-1"/>
    <property type="organism name" value="mouse"/>
</dbReference>
<dbReference type="AGR" id="MGI:2442355"/>
<dbReference type="CTD" id="23030"/>
<dbReference type="MGI" id="MGI:2442355">
    <property type="gene designation" value="Kdm4b"/>
</dbReference>
<dbReference type="VEuPathDB" id="HostDB:ENSMUSG00000024201"/>
<dbReference type="eggNOG" id="KOG0958">
    <property type="taxonomic scope" value="Eukaryota"/>
</dbReference>
<dbReference type="GeneTree" id="ENSGT00940000159248"/>
<dbReference type="InParanoid" id="Q91VY5"/>
<dbReference type="OMA" id="KFYQVEF"/>
<dbReference type="OrthoDB" id="9547406at2759"/>
<dbReference type="PhylomeDB" id="Q91VY5"/>
<dbReference type="TreeFam" id="TF106449"/>
<dbReference type="BRENDA" id="1.14.11.66">
    <property type="organism ID" value="3474"/>
</dbReference>
<dbReference type="BRENDA" id="1.14.11.69">
    <property type="organism ID" value="3474"/>
</dbReference>
<dbReference type="Reactome" id="R-MMU-3214842">
    <property type="pathway name" value="HDMs demethylate histones"/>
</dbReference>
<dbReference type="Reactome" id="R-MMU-5693565">
    <property type="pathway name" value="Recruitment and ATM-mediated phosphorylation of repair and signaling proteins at DNA double strand breaks"/>
</dbReference>
<dbReference type="BioGRID-ORCS" id="193796">
    <property type="hits" value="2 hits in 83 CRISPR screens"/>
</dbReference>
<dbReference type="ChiTaRS" id="Kdm4b">
    <property type="organism name" value="mouse"/>
</dbReference>
<dbReference type="PRO" id="PR:Q91VY5"/>
<dbReference type="Proteomes" id="UP000000589">
    <property type="component" value="Chromosome 17"/>
</dbReference>
<dbReference type="RNAct" id="Q91VY5">
    <property type="molecule type" value="protein"/>
</dbReference>
<dbReference type="Bgee" id="ENSMUSG00000024201">
    <property type="expression patterns" value="Expressed in embryonic brain and 269 other cell types or tissues"/>
</dbReference>
<dbReference type="ExpressionAtlas" id="Q91VY5">
    <property type="expression patterns" value="baseline and differential"/>
</dbReference>
<dbReference type="GO" id="GO:0005829">
    <property type="term" value="C:cytosol"/>
    <property type="evidence" value="ECO:0007669"/>
    <property type="project" value="Ensembl"/>
</dbReference>
<dbReference type="GO" id="GO:0005654">
    <property type="term" value="C:nucleoplasm"/>
    <property type="evidence" value="ECO:0007669"/>
    <property type="project" value="Ensembl"/>
</dbReference>
<dbReference type="GO" id="GO:0005721">
    <property type="term" value="C:pericentric heterochromatin"/>
    <property type="evidence" value="ECO:0000314"/>
    <property type="project" value="MGI"/>
</dbReference>
<dbReference type="GO" id="GO:0032452">
    <property type="term" value="F:histone demethylase activity"/>
    <property type="evidence" value="ECO:0000314"/>
    <property type="project" value="MGI"/>
</dbReference>
<dbReference type="GO" id="GO:0051864">
    <property type="term" value="F:histone H3K36 demethylase activity"/>
    <property type="evidence" value="ECO:0000314"/>
    <property type="project" value="MGI"/>
</dbReference>
<dbReference type="GO" id="GO:0032454">
    <property type="term" value="F:histone H3K9 demethylase activity"/>
    <property type="evidence" value="ECO:0000314"/>
    <property type="project" value="MGI"/>
</dbReference>
<dbReference type="GO" id="GO:0140684">
    <property type="term" value="F:histone H3K9me2/H3K9me3 demethylase activity"/>
    <property type="evidence" value="ECO:0007669"/>
    <property type="project" value="UniProtKB-EC"/>
</dbReference>
<dbReference type="GO" id="GO:0008270">
    <property type="term" value="F:zinc ion binding"/>
    <property type="evidence" value="ECO:0007669"/>
    <property type="project" value="UniProtKB-KW"/>
</dbReference>
<dbReference type="GO" id="GO:0007420">
    <property type="term" value="P:brain development"/>
    <property type="evidence" value="ECO:0000315"/>
    <property type="project" value="UniProtKB"/>
</dbReference>
<dbReference type="CDD" id="cd20464">
    <property type="entry name" value="Tudor_JMJD2B_rpt1"/>
    <property type="match status" value="1"/>
</dbReference>
<dbReference type="FunFam" id="3.30.40.10:FF:000029">
    <property type="entry name" value="lysine-specific demethylase 4C isoform X1"/>
    <property type="match status" value="1"/>
</dbReference>
<dbReference type="FunFam" id="2.60.120.650:FF:000003">
    <property type="entry name" value="Lysine-specific demethylase 4D"/>
    <property type="match status" value="1"/>
</dbReference>
<dbReference type="FunFam" id="3.10.330.70:FF:000001">
    <property type="entry name" value="Putative lysine-specific demethylase 4a"/>
    <property type="match status" value="1"/>
</dbReference>
<dbReference type="Gene3D" id="2.30.30.140">
    <property type="match status" value="1"/>
</dbReference>
<dbReference type="Gene3D" id="3.10.330.70">
    <property type="match status" value="1"/>
</dbReference>
<dbReference type="Gene3D" id="2.60.120.650">
    <property type="entry name" value="Cupin"/>
    <property type="match status" value="1"/>
</dbReference>
<dbReference type="Gene3D" id="3.30.40.10">
    <property type="entry name" value="Zinc/RING finger domain, C3HC4 (zinc finger)"/>
    <property type="match status" value="2"/>
</dbReference>
<dbReference type="InterPro" id="IPR034732">
    <property type="entry name" value="EPHD"/>
</dbReference>
<dbReference type="InterPro" id="IPR003347">
    <property type="entry name" value="JmjC_dom"/>
</dbReference>
<dbReference type="InterPro" id="IPR003349">
    <property type="entry name" value="JmjN"/>
</dbReference>
<dbReference type="InterPro" id="IPR040477">
    <property type="entry name" value="KDM4-like_Tudor"/>
</dbReference>
<dbReference type="InterPro" id="IPR002999">
    <property type="entry name" value="Tudor"/>
</dbReference>
<dbReference type="InterPro" id="IPR047483">
    <property type="entry name" value="Tudor_KDM4B_rpt1"/>
</dbReference>
<dbReference type="InterPro" id="IPR011011">
    <property type="entry name" value="Znf_FYVE_PHD"/>
</dbReference>
<dbReference type="InterPro" id="IPR001965">
    <property type="entry name" value="Znf_PHD"/>
</dbReference>
<dbReference type="InterPro" id="IPR019787">
    <property type="entry name" value="Znf_PHD-finger"/>
</dbReference>
<dbReference type="InterPro" id="IPR013083">
    <property type="entry name" value="Znf_RING/FYVE/PHD"/>
</dbReference>
<dbReference type="PANTHER" id="PTHR10694">
    <property type="entry name" value="LYSINE-SPECIFIC DEMETHYLASE"/>
    <property type="match status" value="1"/>
</dbReference>
<dbReference type="PANTHER" id="PTHR10694:SF30">
    <property type="entry name" value="LYSINE-SPECIFIC DEMETHYLASE 4B"/>
    <property type="match status" value="1"/>
</dbReference>
<dbReference type="Pfam" id="PF02373">
    <property type="entry name" value="JmjC"/>
    <property type="match status" value="1"/>
</dbReference>
<dbReference type="Pfam" id="PF02375">
    <property type="entry name" value="JmjN"/>
    <property type="match status" value="1"/>
</dbReference>
<dbReference type="Pfam" id="PF13831">
    <property type="entry name" value="PHD_2"/>
    <property type="match status" value="1"/>
</dbReference>
<dbReference type="Pfam" id="PF18104">
    <property type="entry name" value="Tudor_2"/>
    <property type="match status" value="2"/>
</dbReference>
<dbReference type="Pfam" id="PF13832">
    <property type="entry name" value="zf-HC5HC2H_2"/>
    <property type="match status" value="1"/>
</dbReference>
<dbReference type="SMART" id="SM00558">
    <property type="entry name" value="JmjC"/>
    <property type="match status" value="1"/>
</dbReference>
<dbReference type="SMART" id="SM00545">
    <property type="entry name" value="JmjN"/>
    <property type="match status" value="1"/>
</dbReference>
<dbReference type="SMART" id="SM00249">
    <property type="entry name" value="PHD"/>
    <property type="match status" value="2"/>
</dbReference>
<dbReference type="SMART" id="SM00333">
    <property type="entry name" value="TUDOR"/>
    <property type="match status" value="2"/>
</dbReference>
<dbReference type="SUPFAM" id="SSF51197">
    <property type="entry name" value="Clavaminate synthase-like"/>
    <property type="match status" value="1"/>
</dbReference>
<dbReference type="SUPFAM" id="SSF57903">
    <property type="entry name" value="FYVE/PHD zinc finger"/>
    <property type="match status" value="1"/>
</dbReference>
<dbReference type="SUPFAM" id="SSF63748">
    <property type="entry name" value="Tudor/PWWP/MBT"/>
    <property type="match status" value="2"/>
</dbReference>
<dbReference type="PROSITE" id="PS51805">
    <property type="entry name" value="EPHD"/>
    <property type="match status" value="1"/>
</dbReference>
<dbReference type="PROSITE" id="PS51184">
    <property type="entry name" value="JMJC"/>
    <property type="match status" value="1"/>
</dbReference>
<dbReference type="PROSITE" id="PS51183">
    <property type="entry name" value="JMJN"/>
    <property type="match status" value="1"/>
</dbReference>
<organism>
    <name type="scientific">Mus musculus</name>
    <name type="common">Mouse</name>
    <dbReference type="NCBI Taxonomy" id="10090"/>
    <lineage>
        <taxon>Eukaryota</taxon>
        <taxon>Metazoa</taxon>
        <taxon>Chordata</taxon>
        <taxon>Craniata</taxon>
        <taxon>Vertebrata</taxon>
        <taxon>Euteleostomi</taxon>
        <taxon>Mammalia</taxon>
        <taxon>Eutheria</taxon>
        <taxon>Euarchontoglires</taxon>
        <taxon>Glires</taxon>
        <taxon>Rodentia</taxon>
        <taxon>Myomorpha</taxon>
        <taxon>Muroidea</taxon>
        <taxon>Muridae</taxon>
        <taxon>Murinae</taxon>
        <taxon>Mus</taxon>
        <taxon>Mus</taxon>
    </lineage>
</organism>
<keyword id="KW-0007">Acetylation</keyword>
<keyword id="KW-0025">Alternative splicing</keyword>
<keyword id="KW-0156">Chromatin regulator</keyword>
<keyword id="KW-0223">Dioxygenase</keyword>
<keyword id="KW-0408">Iron</keyword>
<keyword id="KW-0479">Metal-binding</keyword>
<keyword id="KW-0539">Nucleus</keyword>
<keyword id="KW-0560">Oxidoreductase</keyword>
<keyword id="KW-1185">Reference proteome</keyword>
<keyword id="KW-0677">Repeat</keyword>
<keyword id="KW-0804">Transcription</keyword>
<keyword id="KW-0805">Transcription regulation</keyword>
<keyword id="KW-0862">Zinc</keyword>
<keyword id="KW-0863">Zinc-finger</keyword>
<evidence type="ECO:0000250" key="1"/>
<evidence type="ECO:0000250" key="2">
    <source>
        <dbReference type="UniProtKB" id="B2RXH2"/>
    </source>
</evidence>
<evidence type="ECO:0000250" key="3">
    <source>
        <dbReference type="UniProtKB" id="O94953"/>
    </source>
</evidence>
<evidence type="ECO:0000255" key="4">
    <source>
        <dbReference type="PROSITE-ProRule" id="PRU00537"/>
    </source>
</evidence>
<evidence type="ECO:0000255" key="5">
    <source>
        <dbReference type="PROSITE-ProRule" id="PRU00538"/>
    </source>
</evidence>
<evidence type="ECO:0000255" key="6">
    <source>
        <dbReference type="PROSITE-ProRule" id="PRU01146"/>
    </source>
</evidence>
<evidence type="ECO:0000256" key="7">
    <source>
        <dbReference type="SAM" id="MobiDB-lite"/>
    </source>
</evidence>
<evidence type="ECO:0000269" key="8">
    <source>
    </source>
</evidence>
<evidence type="ECO:0000303" key="9">
    <source>
    </source>
</evidence>
<evidence type="ECO:0000305" key="10"/>
<proteinExistence type="evidence at transcript level"/>
<accession>Q91VY5</accession>
<accession>Q3UR22</accession>
<accession>Q6ZQ30</accession>
<accession>Q99K42</accession>
<feature type="chain" id="PRO_0000183176" description="Lysine-specific demethylase 4B">
    <location>
        <begin position="1"/>
        <end position="1086"/>
    </location>
</feature>
<feature type="domain" description="JmjN" evidence="4">
    <location>
        <begin position="15"/>
        <end position="57"/>
    </location>
</feature>
<feature type="domain" description="JmjC" evidence="5">
    <location>
        <begin position="146"/>
        <end position="309"/>
    </location>
</feature>
<feature type="domain" description="Tudor 1">
    <location>
        <begin position="905"/>
        <end position="962"/>
    </location>
</feature>
<feature type="domain" description="Tudor 2">
    <location>
        <begin position="963"/>
        <end position="1019"/>
    </location>
</feature>
<feature type="zinc finger region" description="PHD-type 1">
    <location>
        <begin position="719"/>
        <end position="777"/>
    </location>
</feature>
<feature type="zinc finger region" description="C2HC pre-PHD-type" evidence="6">
    <location>
        <begin position="782"/>
        <end position="815"/>
    </location>
</feature>
<feature type="zinc finger region" description="PHD-type 2" evidence="6">
    <location>
        <begin position="838"/>
        <end position="895"/>
    </location>
</feature>
<feature type="region of interest" description="Disordered" evidence="7">
    <location>
        <begin position="379"/>
        <end position="536"/>
    </location>
</feature>
<feature type="region of interest" description="Disordered" evidence="7">
    <location>
        <begin position="575"/>
        <end position="624"/>
    </location>
</feature>
<feature type="region of interest" description="Disordered" evidence="7">
    <location>
        <begin position="1024"/>
        <end position="1043"/>
    </location>
</feature>
<feature type="compositionally biased region" description="Basic and acidic residues" evidence="7">
    <location>
        <begin position="379"/>
        <end position="395"/>
    </location>
</feature>
<feature type="compositionally biased region" description="Basic residues" evidence="7">
    <location>
        <begin position="401"/>
        <end position="410"/>
    </location>
</feature>
<feature type="compositionally biased region" description="Acidic residues" evidence="7">
    <location>
        <begin position="441"/>
        <end position="450"/>
    </location>
</feature>
<feature type="compositionally biased region" description="Basic and acidic residues" evidence="7">
    <location>
        <begin position="456"/>
        <end position="467"/>
    </location>
</feature>
<feature type="compositionally biased region" description="Basic residues" evidence="7">
    <location>
        <begin position="468"/>
        <end position="480"/>
    </location>
</feature>
<feature type="compositionally biased region" description="Low complexity" evidence="7">
    <location>
        <begin position="512"/>
        <end position="522"/>
    </location>
</feature>
<feature type="compositionally biased region" description="Polar residues" evidence="7">
    <location>
        <begin position="585"/>
        <end position="597"/>
    </location>
</feature>
<feature type="compositionally biased region" description="Polar residues" evidence="7">
    <location>
        <begin position="1026"/>
        <end position="1037"/>
    </location>
</feature>
<feature type="binding site" evidence="2">
    <location>
        <position position="133"/>
    </location>
    <ligand>
        <name>2-oxoglutarate</name>
        <dbReference type="ChEBI" id="CHEBI:16810"/>
    </ligand>
</feature>
<feature type="binding site" evidence="5">
    <location>
        <position position="189"/>
    </location>
    <ligand>
        <name>Fe cation</name>
        <dbReference type="ChEBI" id="CHEBI:24875"/>
        <note>catalytic</note>
    </ligand>
</feature>
<feature type="binding site" evidence="5">
    <location>
        <position position="191"/>
    </location>
    <ligand>
        <name>Fe cation</name>
        <dbReference type="ChEBI" id="CHEBI:24875"/>
        <note>catalytic</note>
    </ligand>
</feature>
<feature type="binding site" evidence="2">
    <location>
        <position position="199"/>
    </location>
    <ligand>
        <name>2-oxoglutarate</name>
        <dbReference type="ChEBI" id="CHEBI:16810"/>
    </ligand>
</feature>
<feature type="binding site" evidence="2">
    <location>
        <position position="207"/>
    </location>
    <ligand>
        <name>2-oxoglutarate</name>
        <dbReference type="ChEBI" id="CHEBI:16810"/>
    </ligand>
</feature>
<feature type="binding site" evidence="1">
    <location>
        <position position="235"/>
    </location>
    <ligand>
        <name>Zn(2+)</name>
        <dbReference type="ChEBI" id="CHEBI:29105"/>
    </ligand>
</feature>
<feature type="binding site" evidence="1">
    <location>
        <position position="241"/>
    </location>
    <ligand>
        <name>Zn(2+)</name>
        <dbReference type="ChEBI" id="CHEBI:29105"/>
    </ligand>
</feature>
<feature type="binding site" evidence="2">
    <location>
        <position position="242"/>
    </location>
    <ligand>
        <name>2-oxoglutarate</name>
        <dbReference type="ChEBI" id="CHEBI:16810"/>
    </ligand>
</feature>
<feature type="binding site" evidence="5">
    <location>
        <position position="277"/>
    </location>
    <ligand>
        <name>Fe cation</name>
        <dbReference type="ChEBI" id="CHEBI:24875"/>
        <note>catalytic</note>
    </ligand>
</feature>
<feature type="binding site" evidence="1">
    <location>
        <position position="307"/>
    </location>
    <ligand>
        <name>Zn(2+)</name>
        <dbReference type="ChEBI" id="CHEBI:29105"/>
    </ligand>
</feature>
<feature type="binding site" evidence="1">
    <location>
        <position position="309"/>
    </location>
    <ligand>
        <name>Zn(2+)</name>
        <dbReference type="ChEBI" id="CHEBI:29105"/>
    </ligand>
</feature>
<feature type="modified residue" description="N6-acetyllysine" evidence="3">
    <location>
        <position position="599"/>
    </location>
</feature>
<feature type="splice variant" id="VSP_018309" description="In isoform 2." evidence="9">
    <location>
        <begin position="593"/>
        <end position="599"/>
    </location>
</feature>
<feature type="splice variant" id="VSP_018310" description="In isoform 2." evidence="9">
    <location>
        <begin position="940"/>
        <end position="997"/>
    </location>
</feature>
<feature type="sequence conflict" description="In Ref. 1; BAE24866." evidence="10" ref="1">
    <original>A</original>
    <variation>T</variation>
    <location>
        <position position="40"/>
    </location>
</feature>
<feature type="sequence conflict" description="In Ref. 2; AAH05480." evidence="10" ref="2">
    <original>M</original>
    <variation>L</variation>
    <location>
        <position position="576"/>
    </location>
</feature>
<gene>
    <name type="primary">Kdm4b</name>
    <name type="synonym">Jhdm3b</name>
    <name type="synonym">Jmjd2b</name>
</gene>
<sequence>MGSEDHSAQNPSCKIMTFRPTMDEFRDFNRYVAYIESQGAHRAGLAKIIPPKEWKPRQTYDDIDDVVIPAPIQQVVTGQSGLFTQYNIQKKAMTVGEYRRLANSEKYCTPRHQDFDDLERKYWKNLTFVSPIYGADISGSLYDDDVAQWNIGNLRTILDMVERECGTIIEGVNTPYLYFGMWKTTFAWHTEDMDLYSINYLHFGEPKSWYAIPPEHGKRLERLAIGFFPGSSQGCDAFLRHKMTLISPIILKKYGIPFSRITQEAGEFMITFPYGYHAGFNHGFNCAESTNFATLRWIDYGKVATQCTCRKDMVKISMDVFVRILQPERYEQWKQGRDLTVLDHTRPTALSSPELSSWSASRTSIKAKLLRRQISVKESRPWRKAEEERRREPTRRPGPASHRRRSQPKKSKPEESRSPGEATAGVSTLDEARGCSRGEAMPEDEEEEELLPSQGHEAEGVEEDGRGKPRPTKARNKKKTPSPSSPPLLSAPPALFPTEEVLRPPPQPKSPGPAMGPMAAEGGPPPTPLNVVPPGAPVEEAEVRPRPIIPMLYVLPRTSSTDGDREHSAHAQLAPMELGPEEENQAQAGDSQGTTPFSKLKVEIKKSRRHPLGRPPTRSPLSVVKQEASSDEEAFLFSGEDDVTDPEALRSLLSLQWKNKAASFQAERKFNAAAALSEPYCAICTLFYPYSQSVQTERDSAVQPPSKSGQRTRPLIPEMCFTSSGENTEPLPANSYVGEDGTSPLISCAHCCLQVHASCYGVRPELAKEGWTCSRCAAHAWTAECCLCNLRGGALQRTTEHRWIHVICAIAVPEVRFLNVIERNPVDVSAIPEQRWKLKCIYCRKRMKRVSGACIQCSYEHCSTSFHVTCAHAAGVLMEPDDWPYVVSITCLKHRASGAGGQLLRTVSLGQIVITKNRNGLYYRCRVIGTTAQTFYEVNFDDGSYSDNLYPESITSRDCLRLGPPPEGELVELRWTDGNLYRARFISMATSLIYQVEFEDGSQLTVKRGDIFTLEEELPKRVRSRLSLSTGTPQEPSFSGDDVKAAKRPRVASVLATTTEDTGRSPEYLSFMESLLQAQGRPGAPF</sequence>
<name>KDM4B_MOUSE</name>
<comment type="function">
    <text evidence="3 8">Histone demethylase that specifically demethylates 'Lys-9' of histone H3, thereby playing a role in histone code. Does not demethylate histone H3 'Lys-4', H3 'Lys-27', H3 'Lys-36' nor H4 'Lys-20'. Only able to demethylate trimethylated H3 'Lys-9', with a weaker activity than KDM4A, KDM4C and KDM4D. Demethylation of Lys residue generates formaldehyde and succinate (By similarity). Plays a critical role in the development of the central nervous system (CNS).</text>
</comment>
<comment type="catalytic activity">
    <reaction evidence="3">
        <text>N(6),N(6),N(6)-trimethyl-L-lysyl(9)-[histone H3] + 2 2-oxoglutarate + 2 O2 = N(6)-methyl-L-lysyl(9)-[histone H3] + 2 formaldehyde + 2 succinate + 2 CO2</text>
        <dbReference type="Rhea" id="RHEA:60200"/>
        <dbReference type="Rhea" id="RHEA-COMP:15538"/>
        <dbReference type="Rhea" id="RHEA-COMP:15542"/>
        <dbReference type="ChEBI" id="CHEBI:15379"/>
        <dbReference type="ChEBI" id="CHEBI:16526"/>
        <dbReference type="ChEBI" id="CHEBI:16810"/>
        <dbReference type="ChEBI" id="CHEBI:16842"/>
        <dbReference type="ChEBI" id="CHEBI:30031"/>
        <dbReference type="ChEBI" id="CHEBI:61929"/>
        <dbReference type="ChEBI" id="CHEBI:61961"/>
        <dbReference type="EC" id="1.14.11.66"/>
    </reaction>
</comment>
<comment type="cofactor">
    <cofactor evidence="1">
        <name>Fe(2+)</name>
        <dbReference type="ChEBI" id="CHEBI:29033"/>
    </cofactor>
    <text evidence="1">Binds 1 Fe(2+) ion per subunit.</text>
</comment>
<comment type="subcellular location">
    <subcellularLocation>
        <location evidence="4">Nucleus</location>
    </subcellularLocation>
</comment>
<comment type="alternative products">
    <event type="alternative splicing"/>
    <isoform>
        <id>Q91VY5-1</id>
        <name>1</name>
        <sequence type="displayed"/>
    </isoform>
    <isoform>
        <id>Q91VY5-2</id>
        <name>2</name>
        <sequence type="described" ref="VSP_018309 VSP_018310"/>
    </isoform>
</comment>
<comment type="developmental stage">
    <text evidence="8">Expression is especially strong in the hippocampus and throughout the CNS from embryonic periods through adulthood.</text>
</comment>
<comment type="domain">
    <text evidence="1">The 2 Tudor domains recognize and bind methylated histones. Double Tudor domain has an interdigitated structure and the unusual fold is required for its ability to bind methylated histone tails (By similarity).</text>
</comment>
<comment type="similarity">
    <text evidence="10">Belongs to the JHDM3 histone demethylase family.</text>
</comment>
<comment type="sequence caution" evidence="10">
    <conflict type="erroneous initiation">
        <sequence resource="EMBL-CDS" id="BAC98043"/>
    </conflict>
    <text>Extended N-terminus.</text>
</comment>